<gene>
    <name evidence="1" type="primary">rplS</name>
    <name type="ordered locus">FTF0153</name>
</gene>
<name>RL19_FRAT1</name>
<organism>
    <name type="scientific">Francisella tularensis subsp. tularensis (strain FSC 198)</name>
    <dbReference type="NCBI Taxonomy" id="393115"/>
    <lineage>
        <taxon>Bacteria</taxon>
        <taxon>Pseudomonadati</taxon>
        <taxon>Pseudomonadota</taxon>
        <taxon>Gammaproteobacteria</taxon>
        <taxon>Thiotrichales</taxon>
        <taxon>Francisellaceae</taxon>
        <taxon>Francisella</taxon>
    </lineage>
</organism>
<accession>Q14JS6</accession>
<keyword id="KW-0687">Ribonucleoprotein</keyword>
<keyword id="KW-0689">Ribosomal protein</keyword>
<feature type="chain" id="PRO_1000049676" description="Large ribosomal subunit protein bL19">
    <location>
        <begin position="1"/>
        <end position="115"/>
    </location>
</feature>
<evidence type="ECO:0000255" key="1">
    <source>
        <dbReference type="HAMAP-Rule" id="MF_00402"/>
    </source>
</evidence>
<evidence type="ECO:0000305" key="2"/>
<protein>
    <recommendedName>
        <fullName evidence="1">Large ribosomal subunit protein bL19</fullName>
    </recommendedName>
    <alternativeName>
        <fullName evidence="2">50S ribosomal protein L19</fullName>
    </alternativeName>
</protein>
<sequence length="115" mass="13323">MKNKFVELVEKSQLRTDLPEFNPGDSITVNLWIKEGDKQRIQAFKGFVLRKRNRGLHSAFTVRKMSSGMGVERTFQTHSPLIDSIIVEKRADVRRAKLYYMRGLTGRAARIKEKV</sequence>
<proteinExistence type="inferred from homology"/>
<comment type="function">
    <text evidence="1">This protein is located at the 30S-50S ribosomal subunit interface and may play a role in the structure and function of the aminoacyl-tRNA binding site.</text>
</comment>
<comment type="similarity">
    <text evidence="1">Belongs to the bacterial ribosomal protein bL19 family.</text>
</comment>
<dbReference type="EMBL" id="AM286280">
    <property type="protein sequence ID" value="CAL08169.1"/>
    <property type="molecule type" value="Genomic_DNA"/>
</dbReference>
<dbReference type="RefSeq" id="WP_003019923.1">
    <property type="nucleotide sequence ID" value="NC_008245.1"/>
</dbReference>
<dbReference type="SMR" id="Q14JS6"/>
<dbReference type="KEGG" id="ftf:FTF0153"/>
<dbReference type="HOGENOM" id="CLU_103507_2_2_6"/>
<dbReference type="GO" id="GO:0022625">
    <property type="term" value="C:cytosolic large ribosomal subunit"/>
    <property type="evidence" value="ECO:0007669"/>
    <property type="project" value="TreeGrafter"/>
</dbReference>
<dbReference type="GO" id="GO:0003735">
    <property type="term" value="F:structural constituent of ribosome"/>
    <property type="evidence" value="ECO:0007669"/>
    <property type="project" value="InterPro"/>
</dbReference>
<dbReference type="GO" id="GO:0006412">
    <property type="term" value="P:translation"/>
    <property type="evidence" value="ECO:0007669"/>
    <property type="project" value="UniProtKB-UniRule"/>
</dbReference>
<dbReference type="FunFam" id="2.30.30.790:FF:000001">
    <property type="entry name" value="50S ribosomal protein L19"/>
    <property type="match status" value="1"/>
</dbReference>
<dbReference type="Gene3D" id="2.30.30.790">
    <property type="match status" value="1"/>
</dbReference>
<dbReference type="HAMAP" id="MF_00402">
    <property type="entry name" value="Ribosomal_bL19"/>
    <property type="match status" value="1"/>
</dbReference>
<dbReference type="InterPro" id="IPR001857">
    <property type="entry name" value="Ribosomal_bL19"/>
</dbReference>
<dbReference type="InterPro" id="IPR018257">
    <property type="entry name" value="Ribosomal_bL19_CS"/>
</dbReference>
<dbReference type="InterPro" id="IPR038657">
    <property type="entry name" value="Ribosomal_bL19_sf"/>
</dbReference>
<dbReference type="InterPro" id="IPR008991">
    <property type="entry name" value="Translation_prot_SH3-like_sf"/>
</dbReference>
<dbReference type="NCBIfam" id="TIGR01024">
    <property type="entry name" value="rplS_bact"/>
    <property type="match status" value="1"/>
</dbReference>
<dbReference type="PANTHER" id="PTHR15680:SF9">
    <property type="entry name" value="LARGE RIBOSOMAL SUBUNIT PROTEIN BL19M"/>
    <property type="match status" value="1"/>
</dbReference>
<dbReference type="PANTHER" id="PTHR15680">
    <property type="entry name" value="RIBOSOMAL PROTEIN L19"/>
    <property type="match status" value="1"/>
</dbReference>
<dbReference type="Pfam" id="PF01245">
    <property type="entry name" value="Ribosomal_L19"/>
    <property type="match status" value="1"/>
</dbReference>
<dbReference type="PIRSF" id="PIRSF002191">
    <property type="entry name" value="Ribosomal_L19"/>
    <property type="match status" value="1"/>
</dbReference>
<dbReference type="PRINTS" id="PR00061">
    <property type="entry name" value="RIBOSOMALL19"/>
</dbReference>
<dbReference type="SUPFAM" id="SSF50104">
    <property type="entry name" value="Translation proteins SH3-like domain"/>
    <property type="match status" value="1"/>
</dbReference>
<dbReference type="PROSITE" id="PS01015">
    <property type="entry name" value="RIBOSOMAL_L19"/>
    <property type="match status" value="1"/>
</dbReference>
<reference key="1">
    <citation type="journal article" date="2007" name="PLoS ONE">
        <title>Genome sequencing shows that European isolates of Francisella tularensis subspecies tularensis are almost identical to US laboratory strain Schu S4.</title>
        <authorList>
            <person name="Chaudhuri R.R."/>
            <person name="Ren C.-P."/>
            <person name="Desmond L."/>
            <person name="Vincent G.A."/>
            <person name="Silman N.J."/>
            <person name="Brehm J.K."/>
            <person name="Elmore M.J."/>
            <person name="Hudson M.J."/>
            <person name="Forsman M."/>
            <person name="Isherwood K.E."/>
            <person name="Gurycova D."/>
            <person name="Minton N.P."/>
            <person name="Titball R.W."/>
            <person name="Pallen M.J."/>
            <person name="Vipond R."/>
        </authorList>
    </citation>
    <scope>NUCLEOTIDE SEQUENCE [LARGE SCALE GENOMIC DNA]</scope>
    <source>
        <strain>FSC 198</strain>
    </source>
</reference>